<name>FAR5_PACBA</name>
<protein>
    <recommendedName>
        <fullName evidence="4">Extended FMRFamide-5</fullName>
        <shortName evidence="4">FMRFa-5</shortName>
    </recommendedName>
</protein>
<feature type="peptide" id="PRO_0000421517" description="Extended FMRFamide-5" evidence="3">
    <location>
        <begin position="1"/>
        <end position="8"/>
    </location>
</feature>
<feature type="modified residue" description="Leucine amide" evidence="3">
    <location>
        <position position="8"/>
    </location>
</feature>
<feature type="unsure residue" description="L or I" evidence="3">
    <location>
        <position position="6"/>
    </location>
</feature>
<feature type="unsure residue" description="L or I" evidence="3">
    <location>
        <position position="8"/>
    </location>
</feature>
<keyword id="KW-0027">Amidation</keyword>
<keyword id="KW-0903">Direct protein sequencing</keyword>
<keyword id="KW-0527">Neuropeptide</keyword>
<keyword id="KW-0964">Secreted</keyword>
<evidence type="ECO:0000250" key="1">
    <source>
        <dbReference type="UniProtKB" id="P34405"/>
    </source>
</evidence>
<evidence type="ECO:0000255" key="2"/>
<evidence type="ECO:0000269" key="3">
    <source>
    </source>
</evidence>
<evidence type="ECO:0000303" key="4">
    <source>
    </source>
</evidence>
<evidence type="ECO:0000305" key="5"/>
<evidence type="ECO:0000305" key="6">
    <source>
    </source>
</evidence>
<comment type="function">
    <text evidence="1">FMRFamides and FMRFamide-like peptides are neuropeptides.</text>
</comment>
<comment type="subcellular location">
    <subcellularLocation>
        <location evidence="6">Secreted</location>
    </subcellularLocation>
</comment>
<comment type="similarity">
    <text evidence="2">Belongs to the FARP (FMRF amide related peptide) family.</text>
</comment>
<organism>
    <name type="scientific">Pachyphasma brandbergense</name>
    <name type="common">Gladiator</name>
    <name type="synonym">Heel-walker</name>
    <dbReference type="NCBI Taxonomy" id="1041430"/>
    <lineage>
        <taxon>Eukaryota</taxon>
        <taxon>Metazoa</taxon>
        <taxon>Ecdysozoa</taxon>
        <taxon>Arthropoda</taxon>
        <taxon>Hexapoda</taxon>
        <taxon>Insecta</taxon>
        <taxon>Pterygota</taxon>
        <taxon>Neoptera</taxon>
        <taxon>Polyneoptera</taxon>
        <taxon>Mantophasmatodea</taxon>
        <taxon>Mantophasmatidae</taxon>
        <taxon>Pachyphasma</taxon>
    </lineage>
</organism>
<proteinExistence type="evidence at protein level"/>
<sequence length="8" mass="1034">TDRNFLRL</sequence>
<accession>B3A0K0</accession>
<dbReference type="GO" id="GO:0005576">
    <property type="term" value="C:extracellular region"/>
    <property type="evidence" value="ECO:0007669"/>
    <property type="project" value="UniProtKB-SubCell"/>
</dbReference>
<dbReference type="GO" id="GO:0007218">
    <property type="term" value="P:neuropeptide signaling pathway"/>
    <property type="evidence" value="ECO:0007669"/>
    <property type="project" value="UniProtKB-KW"/>
</dbReference>
<reference evidence="5" key="1">
    <citation type="journal article" date="2012" name="Syst. Biol.">
        <title>Peptidomics-based phylogeny and biogeography of Mantophasmatodea (Hexapoda).</title>
        <authorList>
            <person name="Predel R."/>
            <person name="Neupert S."/>
            <person name="Huetteroth W."/>
            <person name="Kahnt J."/>
            <person name="Waidelich D."/>
            <person name="Roth S."/>
        </authorList>
    </citation>
    <scope>PROTEIN SEQUENCE</scope>
    <scope>AMIDATION AT LEU-8</scope>
    <source>
        <tissue evidence="3">Thoracic perisympathetic organs</tissue>
    </source>
</reference>